<protein>
    <recommendedName>
        <fullName>Vegetative-specific protein V4</fullName>
    </recommendedName>
</protein>
<organism>
    <name type="scientific">Dictyostelium discoideum</name>
    <name type="common">Social amoeba</name>
    <dbReference type="NCBI Taxonomy" id="44689"/>
    <lineage>
        <taxon>Eukaryota</taxon>
        <taxon>Amoebozoa</taxon>
        <taxon>Evosea</taxon>
        <taxon>Eumycetozoa</taxon>
        <taxon>Dictyostelia</taxon>
        <taxon>Dictyosteliales</taxon>
        <taxon>Dictyosteliaceae</taxon>
        <taxon>Dictyostelium</taxon>
    </lineage>
</organism>
<name>VSV4_DICDI</name>
<feature type="chain" id="PRO_0000065932" description="Vegetative-specific protein V4">
    <location>
        <begin position="1"/>
        <end position="160"/>
    </location>
</feature>
<feature type="repeat" description="1">
    <location>
        <begin position="151"/>
        <end position="153"/>
    </location>
</feature>
<feature type="repeat" description="2">
    <location>
        <begin position="154"/>
        <end position="156"/>
    </location>
</feature>
<feature type="repeat" description="3">
    <location>
        <begin position="157"/>
        <end position="159"/>
    </location>
</feature>
<feature type="region of interest" description="3 X 3 AA tandem repeats of N-Q-[PG]">
    <location>
        <begin position="151"/>
        <end position="159"/>
    </location>
</feature>
<accession>P14330</accession>
<accession>P14331</accession>
<accession>Q3LQX1</accession>
<accession>Q54V31</accession>
<dbReference type="EMBL" id="S89883">
    <property type="protein sequence ID" value="AAA08249.2"/>
    <property type="molecule type" value="mRNA"/>
</dbReference>
<dbReference type="EMBL" id="X15380">
    <property type="protein sequence ID" value="CAA33440.1"/>
    <property type="molecule type" value="Genomic_DNA"/>
</dbReference>
<dbReference type="EMBL" id="X15381">
    <property type="protein sequence ID" value="CAA33441.1"/>
    <property type="molecule type" value="Genomic_DNA"/>
</dbReference>
<dbReference type="EMBL" id="AAFI02000037">
    <property type="protein sequence ID" value="EAL67068.1"/>
    <property type="molecule type" value="Genomic_DNA"/>
</dbReference>
<dbReference type="PIR" id="S35649">
    <property type="entry name" value="S35649"/>
</dbReference>
<dbReference type="RefSeq" id="XP_641100.1">
    <property type="nucleotide sequence ID" value="XM_636008.1"/>
</dbReference>
<dbReference type="STRING" id="44689.P14330"/>
<dbReference type="PaxDb" id="44689-DDB0215343"/>
<dbReference type="EnsemblProtists" id="EAL67068">
    <property type="protein sequence ID" value="EAL67068"/>
    <property type="gene ID" value="DDB_G0280533"/>
</dbReference>
<dbReference type="GeneID" id="8622659"/>
<dbReference type="KEGG" id="ddi:DDB_G0280533"/>
<dbReference type="dictyBase" id="DDB_G0280533">
    <property type="gene designation" value="lmcB"/>
</dbReference>
<dbReference type="VEuPathDB" id="AmoebaDB:DDB_G0280533"/>
<dbReference type="HOGENOM" id="CLU_1655429_0_0_1"/>
<dbReference type="InParanoid" id="P14330"/>
<dbReference type="PRO" id="PR:P14330"/>
<dbReference type="Proteomes" id="UP000002195">
    <property type="component" value="Chromosome 3"/>
</dbReference>
<dbReference type="GO" id="GO:0031152">
    <property type="term" value="P:aggregation involved in sorocarp development"/>
    <property type="evidence" value="ECO:0000315"/>
    <property type="project" value="dictyBase"/>
</dbReference>
<dbReference type="GO" id="GO:0010628">
    <property type="term" value="P:positive regulation of gene expression"/>
    <property type="evidence" value="ECO:0000315"/>
    <property type="project" value="dictyBase"/>
</dbReference>
<gene>
    <name type="primary">lmcB</name>
    <name type="synonym">lmcA</name>
    <name type="synonym">V4</name>
    <name type="ORF">DDB_G0280533</name>
</gene>
<evidence type="ECO:0000269" key="1">
    <source>
    </source>
</evidence>
<sequence>MSSINPSLYNDNGVYCSKVIVTKAIKIRDLDQIPQTVLALAATNNGANYDYASPNYITNARKRFKARLNRNPIWYPKMGDTAAIFFARSDQAGWDIRAEVDEAILYTQKQYPHIDINYAVLTPVNTHDLVDMNLIAQLFAEDDAAAAAAANQPNQPNQGQ</sequence>
<comment type="function">
    <text>Unknown. Its expression during growth is not required for growth but for the proper initiation of development, therefore playing a role in the transition from growth to development.</text>
</comment>
<comment type="developmental stage">
    <text evidence="1">Only expressed during growth.</text>
</comment>
<keyword id="KW-0217">Developmental protein</keyword>
<keyword id="KW-0341">Growth regulation</keyword>
<keyword id="KW-1185">Reference proteome</keyword>
<keyword id="KW-0677">Repeat</keyword>
<proteinExistence type="evidence at transcript level"/>
<reference key="1">
    <citation type="journal article" date="1992" name="Dev. Biol.">
        <title>V4, a gene required for the transition from growth to development in Dictyostelium discoideum.</title>
        <authorList>
            <person name="McPherson C.E."/>
            <person name="Singleton C.K."/>
        </authorList>
    </citation>
    <scope>NUCLEOTIDE SEQUENCE [MRNA]</scope>
    <scope>DEVELOPMENTAL STAGE</scope>
    <source>
        <strain>AX3</strain>
    </source>
</reference>
<reference key="2">
    <citation type="journal article" date="1993" name="J. Mol. Biol.">
        <title>Nutrient-responsive promoter elements of the V4 gene of Dictyostelium discoideum.</title>
        <authorList>
            <person name="McPherson C.E."/>
            <person name="Singleton C.K."/>
        </authorList>
    </citation>
    <scope>NUCLEOTIDE SEQUENCE [GENOMIC DNA]</scope>
</reference>
<reference key="3">
    <citation type="journal article" date="2005" name="Nature">
        <title>The genome of the social amoeba Dictyostelium discoideum.</title>
        <authorList>
            <person name="Eichinger L."/>
            <person name="Pachebat J.A."/>
            <person name="Gloeckner G."/>
            <person name="Rajandream M.A."/>
            <person name="Sucgang R."/>
            <person name="Berriman M."/>
            <person name="Song J."/>
            <person name="Olsen R."/>
            <person name="Szafranski K."/>
            <person name="Xu Q."/>
            <person name="Tunggal B."/>
            <person name="Kummerfeld S."/>
            <person name="Madera M."/>
            <person name="Konfortov B.A."/>
            <person name="Rivero F."/>
            <person name="Bankier A.T."/>
            <person name="Lehmann R."/>
            <person name="Hamlin N."/>
            <person name="Davies R."/>
            <person name="Gaudet P."/>
            <person name="Fey P."/>
            <person name="Pilcher K."/>
            <person name="Chen G."/>
            <person name="Saunders D."/>
            <person name="Sodergren E.J."/>
            <person name="Davis P."/>
            <person name="Kerhornou A."/>
            <person name="Nie X."/>
            <person name="Hall N."/>
            <person name="Anjard C."/>
            <person name="Hemphill L."/>
            <person name="Bason N."/>
            <person name="Farbrother P."/>
            <person name="Desany B."/>
            <person name="Just E."/>
            <person name="Morio T."/>
            <person name="Rost R."/>
            <person name="Churcher C.M."/>
            <person name="Cooper J."/>
            <person name="Haydock S."/>
            <person name="van Driessche N."/>
            <person name="Cronin A."/>
            <person name="Goodhead I."/>
            <person name="Muzny D.M."/>
            <person name="Mourier T."/>
            <person name="Pain A."/>
            <person name="Lu M."/>
            <person name="Harper D."/>
            <person name="Lindsay R."/>
            <person name="Hauser H."/>
            <person name="James K.D."/>
            <person name="Quiles M."/>
            <person name="Madan Babu M."/>
            <person name="Saito T."/>
            <person name="Buchrieser C."/>
            <person name="Wardroper A."/>
            <person name="Felder M."/>
            <person name="Thangavelu M."/>
            <person name="Johnson D."/>
            <person name="Knights A."/>
            <person name="Loulseged H."/>
            <person name="Mungall K.L."/>
            <person name="Oliver K."/>
            <person name="Price C."/>
            <person name="Quail M.A."/>
            <person name="Urushihara H."/>
            <person name="Hernandez J."/>
            <person name="Rabbinowitsch E."/>
            <person name="Steffen D."/>
            <person name="Sanders M."/>
            <person name="Ma J."/>
            <person name="Kohara Y."/>
            <person name="Sharp S."/>
            <person name="Simmonds M.N."/>
            <person name="Spiegler S."/>
            <person name="Tivey A."/>
            <person name="Sugano S."/>
            <person name="White B."/>
            <person name="Walker D."/>
            <person name="Woodward J.R."/>
            <person name="Winckler T."/>
            <person name="Tanaka Y."/>
            <person name="Shaulsky G."/>
            <person name="Schleicher M."/>
            <person name="Weinstock G.M."/>
            <person name="Rosenthal A."/>
            <person name="Cox E.C."/>
            <person name="Chisholm R.L."/>
            <person name="Gibbs R.A."/>
            <person name="Loomis W.F."/>
            <person name="Platzer M."/>
            <person name="Kay R.R."/>
            <person name="Williams J.G."/>
            <person name="Dear P.H."/>
            <person name="Noegel A.A."/>
            <person name="Barrell B.G."/>
            <person name="Kuspa A."/>
        </authorList>
    </citation>
    <scope>NUCLEOTIDE SEQUENCE [LARGE SCALE GENOMIC DNA]</scope>
    <source>
        <strain>AX4</strain>
    </source>
</reference>